<keyword id="KW-0028">Amino-acid biosynthesis</keyword>
<keyword id="KW-0963">Cytoplasm</keyword>
<keyword id="KW-0554">One-carbon metabolism</keyword>
<keyword id="KW-0663">Pyridoxal phosphate</keyword>
<keyword id="KW-1185">Reference proteome</keyword>
<keyword id="KW-0808">Transferase</keyword>
<proteinExistence type="inferred from homology"/>
<accession>Q2YD58</accession>
<gene>
    <name evidence="1" type="primary">glyA</name>
    <name type="ordered locus">Nmul_A0004</name>
</gene>
<protein>
    <recommendedName>
        <fullName evidence="1">Serine hydroxymethyltransferase</fullName>
        <shortName evidence="1">SHMT</shortName>
        <shortName evidence="1">Serine methylase</shortName>
        <ecNumber evidence="1">2.1.2.1</ecNumber>
    </recommendedName>
</protein>
<sequence>MLSSYNTLETVDPDLWQAIKGEMQRQEEYIELIASENYASPAVMQAQGSVLTNKYAEGYPGKRYYGGCEYVDVVEQLAIDRVRALFDAEYVNVQPHSGSQANAAVYLTALKPGDTLLGMSLAHGGHLTHGASVNLSGKIFNAVSYGLRSDTEELDYDEVARLAHEHKPKLIVAGASAYSLVIDWKRFRKIADDIGAYLFVDMAHYAGLVAAGYYPNPVGIADFVTSTTHKTLRGPRGGIIMARAEHEKALNSAIFPQTQGGPLMHVIAAKAVAFKEAASQEFKDYQEQVIDNARVMAKVLQERGLRIVSGRTDCHMFLVDLRPKYITGKQAAESLEVAHITVNKNAIPNDPQKPFVTSGIRIGSPAITTRGFAEFESEQLAHLIADVLEAPTDSSVLTEVARQAKALCAKFPVYQG</sequence>
<name>GLYA_NITMU</name>
<feature type="chain" id="PRO_0000234993" description="Serine hydroxymethyltransferase">
    <location>
        <begin position="1"/>
        <end position="416"/>
    </location>
</feature>
<feature type="binding site" evidence="1">
    <location>
        <position position="121"/>
    </location>
    <ligand>
        <name>(6S)-5,6,7,8-tetrahydrofolate</name>
        <dbReference type="ChEBI" id="CHEBI:57453"/>
    </ligand>
</feature>
<feature type="binding site" evidence="1">
    <location>
        <begin position="125"/>
        <end position="127"/>
    </location>
    <ligand>
        <name>(6S)-5,6,7,8-tetrahydrofolate</name>
        <dbReference type="ChEBI" id="CHEBI:57453"/>
    </ligand>
</feature>
<feature type="site" description="Plays an important role in substrate specificity" evidence="1">
    <location>
        <position position="229"/>
    </location>
</feature>
<feature type="modified residue" description="N6-(pyridoxal phosphate)lysine" evidence="1">
    <location>
        <position position="230"/>
    </location>
</feature>
<comment type="function">
    <text evidence="1">Catalyzes the reversible interconversion of serine and glycine with tetrahydrofolate (THF) serving as the one-carbon carrier. This reaction serves as the major source of one-carbon groups required for the biosynthesis of purines, thymidylate, methionine, and other important biomolecules. Also exhibits THF-independent aldolase activity toward beta-hydroxyamino acids, producing glycine and aldehydes, via a retro-aldol mechanism.</text>
</comment>
<comment type="catalytic activity">
    <reaction evidence="1">
        <text>(6R)-5,10-methylene-5,6,7,8-tetrahydrofolate + glycine + H2O = (6S)-5,6,7,8-tetrahydrofolate + L-serine</text>
        <dbReference type="Rhea" id="RHEA:15481"/>
        <dbReference type="ChEBI" id="CHEBI:15377"/>
        <dbReference type="ChEBI" id="CHEBI:15636"/>
        <dbReference type="ChEBI" id="CHEBI:33384"/>
        <dbReference type="ChEBI" id="CHEBI:57305"/>
        <dbReference type="ChEBI" id="CHEBI:57453"/>
        <dbReference type="EC" id="2.1.2.1"/>
    </reaction>
</comment>
<comment type="cofactor">
    <cofactor evidence="1">
        <name>pyridoxal 5'-phosphate</name>
        <dbReference type="ChEBI" id="CHEBI:597326"/>
    </cofactor>
</comment>
<comment type="pathway">
    <text evidence="1">One-carbon metabolism; tetrahydrofolate interconversion.</text>
</comment>
<comment type="pathway">
    <text evidence="1">Amino-acid biosynthesis; glycine biosynthesis; glycine from L-serine: step 1/1.</text>
</comment>
<comment type="subunit">
    <text evidence="1">Homodimer.</text>
</comment>
<comment type="subcellular location">
    <subcellularLocation>
        <location evidence="1">Cytoplasm</location>
    </subcellularLocation>
</comment>
<comment type="similarity">
    <text evidence="1">Belongs to the SHMT family.</text>
</comment>
<organism>
    <name type="scientific">Nitrosospira multiformis (strain ATCC 25196 / NCIMB 11849 / C 71)</name>
    <dbReference type="NCBI Taxonomy" id="323848"/>
    <lineage>
        <taxon>Bacteria</taxon>
        <taxon>Pseudomonadati</taxon>
        <taxon>Pseudomonadota</taxon>
        <taxon>Betaproteobacteria</taxon>
        <taxon>Nitrosomonadales</taxon>
        <taxon>Nitrosomonadaceae</taxon>
        <taxon>Nitrosospira</taxon>
    </lineage>
</organism>
<dbReference type="EC" id="2.1.2.1" evidence="1"/>
<dbReference type="EMBL" id="CP000103">
    <property type="protein sequence ID" value="ABB73313.1"/>
    <property type="molecule type" value="Genomic_DNA"/>
</dbReference>
<dbReference type="RefSeq" id="WP_011379368.1">
    <property type="nucleotide sequence ID" value="NC_007614.1"/>
</dbReference>
<dbReference type="SMR" id="Q2YD58"/>
<dbReference type="STRING" id="323848.Nmul_A0004"/>
<dbReference type="KEGG" id="nmu:Nmul_A0004"/>
<dbReference type="eggNOG" id="COG0112">
    <property type="taxonomic scope" value="Bacteria"/>
</dbReference>
<dbReference type="HOGENOM" id="CLU_022477_2_1_4"/>
<dbReference type="OrthoDB" id="9803846at2"/>
<dbReference type="UniPathway" id="UPA00193"/>
<dbReference type="UniPathway" id="UPA00288">
    <property type="reaction ID" value="UER01023"/>
</dbReference>
<dbReference type="Proteomes" id="UP000002718">
    <property type="component" value="Chromosome"/>
</dbReference>
<dbReference type="GO" id="GO:0005829">
    <property type="term" value="C:cytosol"/>
    <property type="evidence" value="ECO:0007669"/>
    <property type="project" value="TreeGrafter"/>
</dbReference>
<dbReference type="GO" id="GO:0004372">
    <property type="term" value="F:glycine hydroxymethyltransferase activity"/>
    <property type="evidence" value="ECO:0007669"/>
    <property type="project" value="UniProtKB-UniRule"/>
</dbReference>
<dbReference type="GO" id="GO:0030170">
    <property type="term" value="F:pyridoxal phosphate binding"/>
    <property type="evidence" value="ECO:0007669"/>
    <property type="project" value="UniProtKB-UniRule"/>
</dbReference>
<dbReference type="GO" id="GO:0019264">
    <property type="term" value="P:glycine biosynthetic process from serine"/>
    <property type="evidence" value="ECO:0007669"/>
    <property type="project" value="UniProtKB-UniRule"/>
</dbReference>
<dbReference type="GO" id="GO:0035999">
    <property type="term" value="P:tetrahydrofolate interconversion"/>
    <property type="evidence" value="ECO:0007669"/>
    <property type="project" value="UniProtKB-UniRule"/>
</dbReference>
<dbReference type="CDD" id="cd00378">
    <property type="entry name" value="SHMT"/>
    <property type="match status" value="1"/>
</dbReference>
<dbReference type="FunFam" id="3.40.640.10:FF:000001">
    <property type="entry name" value="Serine hydroxymethyltransferase"/>
    <property type="match status" value="1"/>
</dbReference>
<dbReference type="FunFam" id="3.90.1150.10:FF:000003">
    <property type="entry name" value="Serine hydroxymethyltransferase"/>
    <property type="match status" value="1"/>
</dbReference>
<dbReference type="Gene3D" id="3.90.1150.10">
    <property type="entry name" value="Aspartate Aminotransferase, domain 1"/>
    <property type="match status" value="1"/>
</dbReference>
<dbReference type="Gene3D" id="3.40.640.10">
    <property type="entry name" value="Type I PLP-dependent aspartate aminotransferase-like (Major domain)"/>
    <property type="match status" value="1"/>
</dbReference>
<dbReference type="HAMAP" id="MF_00051">
    <property type="entry name" value="SHMT"/>
    <property type="match status" value="1"/>
</dbReference>
<dbReference type="InterPro" id="IPR015424">
    <property type="entry name" value="PyrdxlP-dep_Trfase"/>
</dbReference>
<dbReference type="InterPro" id="IPR015421">
    <property type="entry name" value="PyrdxlP-dep_Trfase_major"/>
</dbReference>
<dbReference type="InterPro" id="IPR015422">
    <property type="entry name" value="PyrdxlP-dep_Trfase_small"/>
</dbReference>
<dbReference type="InterPro" id="IPR001085">
    <property type="entry name" value="Ser_HO-MeTrfase"/>
</dbReference>
<dbReference type="InterPro" id="IPR049943">
    <property type="entry name" value="Ser_HO-MeTrfase-like"/>
</dbReference>
<dbReference type="InterPro" id="IPR019798">
    <property type="entry name" value="Ser_HO-MeTrfase_PLP_BS"/>
</dbReference>
<dbReference type="InterPro" id="IPR039429">
    <property type="entry name" value="SHMT-like_dom"/>
</dbReference>
<dbReference type="NCBIfam" id="NF000586">
    <property type="entry name" value="PRK00011.1"/>
    <property type="match status" value="1"/>
</dbReference>
<dbReference type="PANTHER" id="PTHR11680">
    <property type="entry name" value="SERINE HYDROXYMETHYLTRANSFERASE"/>
    <property type="match status" value="1"/>
</dbReference>
<dbReference type="PANTHER" id="PTHR11680:SF50">
    <property type="entry name" value="SERINE HYDROXYMETHYLTRANSFERASE"/>
    <property type="match status" value="1"/>
</dbReference>
<dbReference type="Pfam" id="PF00464">
    <property type="entry name" value="SHMT"/>
    <property type="match status" value="1"/>
</dbReference>
<dbReference type="PIRSF" id="PIRSF000412">
    <property type="entry name" value="SHMT"/>
    <property type="match status" value="1"/>
</dbReference>
<dbReference type="SUPFAM" id="SSF53383">
    <property type="entry name" value="PLP-dependent transferases"/>
    <property type="match status" value="1"/>
</dbReference>
<dbReference type="PROSITE" id="PS00096">
    <property type="entry name" value="SHMT"/>
    <property type="match status" value="1"/>
</dbReference>
<reference key="1">
    <citation type="submission" date="2005-08" db="EMBL/GenBank/DDBJ databases">
        <title>Complete sequence of chromosome 1 of Nitrosospira multiformis ATCC 25196.</title>
        <authorList>
            <person name="Copeland A."/>
            <person name="Lucas S."/>
            <person name="Lapidus A."/>
            <person name="Barry K."/>
            <person name="Detter J.C."/>
            <person name="Glavina T."/>
            <person name="Hammon N."/>
            <person name="Israni S."/>
            <person name="Pitluck S."/>
            <person name="Chain P."/>
            <person name="Malfatti S."/>
            <person name="Shin M."/>
            <person name="Vergez L."/>
            <person name="Schmutz J."/>
            <person name="Larimer F."/>
            <person name="Land M."/>
            <person name="Hauser L."/>
            <person name="Kyrpides N."/>
            <person name="Lykidis A."/>
            <person name="Richardson P."/>
        </authorList>
    </citation>
    <scope>NUCLEOTIDE SEQUENCE [LARGE SCALE GENOMIC DNA]</scope>
    <source>
        <strain>ATCC 25196 / NCIMB 11849 / C 71</strain>
    </source>
</reference>
<evidence type="ECO:0000255" key="1">
    <source>
        <dbReference type="HAMAP-Rule" id="MF_00051"/>
    </source>
</evidence>